<dbReference type="EMBL" id="DQ489311">
    <property type="protein sequence ID" value="ABF66342.1"/>
    <property type="molecule type" value="Genomic_RNA"/>
</dbReference>
<dbReference type="SMR" id="A0MD30"/>
<dbReference type="GlyCosmos" id="A0MD30">
    <property type="glycosylation" value="2 sites, No reported glycans"/>
</dbReference>
<dbReference type="Proteomes" id="UP000000937">
    <property type="component" value="Genome"/>
</dbReference>
<dbReference type="GO" id="GO:0005576">
    <property type="term" value="C:extracellular region"/>
    <property type="evidence" value="ECO:0007669"/>
    <property type="project" value="UniProtKB-SubCell"/>
</dbReference>
<dbReference type="GO" id="GO:0044167">
    <property type="term" value="C:host cell endoplasmic reticulum membrane"/>
    <property type="evidence" value="ECO:0007669"/>
    <property type="project" value="UniProtKB-SubCell"/>
</dbReference>
<dbReference type="GO" id="GO:0044178">
    <property type="term" value="C:host cell Golgi membrane"/>
    <property type="evidence" value="ECO:0007669"/>
    <property type="project" value="UniProtKB-SubCell"/>
</dbReference>
<dbReference type="GO" id="GO:0016020">
    <property type="term" value="C:membrane"/>
    <property type="evidence" value="ECO:0007669"/>
    <property type="project" value="UniProtKB-KW"/>
</dbReference>
<dbReference type="GO" id="GO:0019031">
    <property type="term" value="C:viral envelope"/>
    <property type="evidence" value="ECO:0007669"/>
    <property type="project" value="UniProtKB-KW"/>
</dbReference>
<dbReference type="GO" id="GO:0055036">
    <property type="term" value="C:virion membrane"/>
    <property type="evidence" value="ECO:0007669"/>
    <property type="project" value="UniProtKB-SubCell"/>
</dbReference>
<dbReference type="GO" id="GO:0046718">
    <property type="term" value="P:symbiont entry into host cell"/>
    <property type="evidence" value="ECO:0007669"/>
    <property type="project" value="UniProtKB-KW"/>
</dbReference>
<dbReference type="GO" id="GO:0019062">
    <property type="term" value="P:virion attachment to host cell"/>
    <property type="evidence" value="ECO:0007669"/>
    <property type="project" value="UniProtKB-KW"/>
</dbReference>
<dbReference type="InterPro" id="IPR003434">
    <property type="entry name" value="Arteri_GP2a"/>
</dbReference>
<dbReference type="Pfam" id="PF02340">
    <property type="entry name" value="PRRSV_Env"/>
    <property type="match status" value="1"/>
</dbReference>
<accession>A0MD30</accession>
<organism>
    <name type="scientific">Porcine reproductive and respiratory syndrome virus (isolate Pig/United States/SD 01-08/2001)</name>
    <name type="common">PRRSV</name>
    <dbReference type="NCBI Taxonomy" id="857306"/>
    <lineage>
        <taxon>Viruses</taxon>
        <taxon>Riboviria</taxon>
        <taxon>Orthornavirae</taxon>
        <taxon>Pisuviricota</taxon>
        <taxon>Pisoniviricetes</taxon>
        <taxon>Nidovirales</taxon>
        <taxon>Arnidovirineae</taxon>
        <taxon>Arteriviridae</taxon>
        <taxon>Variarterivirinae</taxon>
        <taxon>Betaarterivirus</taxon>
        <taxon>Ampobartevirus</taxon>
        <taxon>Betaarterivirus americense</taxon>
    </lineage>
</organism>
<sequence length="249" mass="28561">MQWGHCGVKSASCSWMPSLSFLSVWLILSFSLPYCLGSPSQDGYWSFFSEWFAPRFSVRALPFTLPNYRRSYESLLPNCRPDVPQFAFKHPLGILWHMRVSHLIDEMVSRRIYQTMEHSGQAAWKYVVGEATLTKLSKLDIVTHFQHLAAVEADSCRFLSSRLVMLKNLAVGNVSLQYNTTLDRVELIFPTPGTRPKLTDFRQWLISVHASIFSSVASSVTLFIVLWLRIPALRYVFGFHWPTATHHSS</sequence>
<proteinExistence type="evidence at protein level"/>
<reference key="1">
    <citation type="journal article" date="2006" name="Adv. Exp. Med. Biol.">
        <title>Construction of a full-length cDNA infectious clone of a European-like Type 1 PRRSV isolated in the U.S.</title>
        <authorList>
            <person name="Fang Y."/>
            <person name="Faaberg K.S."/>
            <person name="Rowland R.R."/>
            <person name="Christopher-Hennings J."/>
            <person name="Pattnaik A.K."/>
            <person name="Osorio F."/>
            <person name="Nelson E.A."/>
        </authorList>
    </citation>
    <scope>NUCLEOTIDE SEQUENCE [GENOMIC RNA]</scope>
    <source>
        <strain>Infectious clone SD 01-08</strain>
    </source>
</reference>
<reference key="2">
    <citation type="journal article" date="2010" name="J. Virol.">
        <title>The minor envelope glycoproteins GP2a and GP4 of porcine reproductive and respiratory syndrome virus interact with the receptor CD163.</title>
        <authorList>
            <person name="Das P.B."/>
            <person name="Dinh P.X."/>
            <person name="Ansari I.H."/>
            <person name="de Lima M."/>
            <person name="Osorio F.A."/>
            <person name="Pattnaik A.K."/>
        </authorList>
    </citation>
    <scope>FUNCTION</scope>
    <scope>INTERACTION WITH PIG CD163</scope>
    <source>
        <strain>FL-12</strain>
    </source>
</reference>
<gene>
    <name type="primary">GP2a</name>
    <name type="ORF">2a</name>
</gene>
<feature type="signal peptide" evidence="2">
    <location>
        <begin position="1"/>
        <end position="35"/>
    </location>
</feature>
<feature type="chain" id="PRO_0000410890" description="Glycoprotein 2a">
    <location>
        <begin position="36"/>
        <end position="249"/>
    </location>
</feature>
<feature type="topological domain" description="Virion surface" evidence="2">
    <location>
        <begin position="36"/>
        <end position="207"/>
    </location>
</feature>
<feature type="transmembrane region" description="Helical" evidence="2">
    <location>
        <begin position="208"/>
        <end position="228"/>
    </location>
</feature>
<feature type="topological domain" description="Intravirion" evidence="2">
    <location>
        <begin position="229"/>
        <end position="249"/>
    </location>
</feature>
<feature type="glycosylation site" description="N-linked (GlcNAc...) asparagine; by host" evidence="2">
    <location>
        <position position="173"/>
    </location>
</feature>
<feature type="glycosylation site" description="N-linked (GlcNAc...) asparagine; by host" evidence="2">
    <location>
        <position position="179"/>
    </location>
</feature>
<keyword id="KW-0325">Glycoprotein</keyword>
<keyword id="KW-1038">Host endoplasmic reticulum</keyword>
<keyword id="KW-1040">Host Golgi apparatus</keyword>
<keyword id="KW-1043">Host membrane</keyword>
<keyword id="KW-0945">Host-virus interaction</keyword>
<keyword id="KW-0472">Membrane</keyword>
<keyword id="KW-0964">Secreted</keyword>
<keyword id="KW-0732">Signal</keyword>
<keyword id="KW-0812">Transmembrane</keyword>
<keyword id="KW-1133">Transmembrane helix</keyword>
<keyword id="KW-1161">Viral attachment to host cell</keyword>
<keyword id="KW-0261">Viral envelope protein</keyword>
<keyword id="KW-0946">Virion</keyword>
<keyword id="KW-1160">Virus entry into host cell</keyword>
<evidence type="ECO:0000250" key="1"/>
<evidence type="ECO:0000255" key="2"/>
<evidence type="ECO:0000269" key="3">
    <source>
    </source>
</evidence>
<protein>
    <recommendedName>
        <fullName>Glycoprotein 2a</fullName>
        <shortName>Protein GP2a</shortName>
    </recommendedName>
    <alternativeName>
        <fullName>GP2</fullName>
    </alternativeName>
</protein>
<organismHost>
    <name type="scientific">Sus scrofa</name>
    <name type="common">Pig</name>
    <dbReference type="NCBI Taxonomy" id="9823"/>
</organismHost>
<name>GP2A_PRRSS</name>
<comment type="function">
    <text evidence="3">Minor envelope protein. Along with GP4, serves as the viral attachment protein responsible for mediating interactions with CD163 thereby playing a role in virus entry into susceptible host cells.</text>
</comment>
<comment type="subunit">
    <text evidence="1 3">Heterotrimer of GP2a, GP3, and GP4 (By similarity). The GP2a-GP3-GP4 complex associates with the E protein (By similarity). Interacts with host CD163; this interaction plays a role in virus entry into host cell.</text>
</comment>
<comment type="subcellular location">
    <subcellularLocation>
        <location evidence="1">Virion membrane</location>
        <topology evidence="1">Single-pass type I membrane protein</topology>
    </subcellularLocation>
    <subcellularLocation>
        <location evidence="1">Host endoplasmic reticulum membrane</location>
        <topology evidence="1">Single-pass type I membrane protein</topology>
    </subcellularLocation>
    <subcellularLocation>
        <location evidence="1">Host Golgi apparatus membrane</location>
        <topology evidence="1">Single-pass type I membrane protein</topology>
    </subcellularLocation>
    <subcellularLocation>
        <location evidence="1">Secreted</location>
    </subcellularLocation>
</comment>